<gene>
    <name evidence="1" type="primary">hemA2</name>
    <name type="ordered locus">Acid345_2564</name>
</gene>
<proteinExistence type="inferred from homology"/>
<comment type="function">
    <text evidence="1">Catalyzes the NADPH-dependent reduction of glutamyl-tRNA(Glu) to glutamate 1-semialdehyde (GSA).</text>
</comment>
<comment type="catalytic activity">
    <reaction evidence="1">
        <text>(S)-4-amino-5-oxopentanoate + tRNA(Glu) + NADP(+) = L-glutamyl-tRNA(Glu) + NADPH + H(+)</text>
        <dbReference type="Rhea" id="RHEA:12344"/>
        <dbReference type="Rhea" id="RHEA-COMP:9663"/>
        <dbReference type="Rhea" id="RHEA-COMP:9680"/>
        <dbReference type="ChEBI" id="CHEBI:15378"/>
        <dbReference type="ChEBI" id="CHEBI:57501"/>
        <dbReference type="ChEBI" id="CHEBI:57783"/>
        <dbReference type="ChEBI" id="CHEBI:58349"/>
        <dbReference type="ChEBI" id="CHEBI:78442"/>
        <dbReference type="ChEBI" id="CHEBI:78520"/>
        <dbReference type="EC" id="1.2.1.70"/>
    </reaction>
</comment>
<comment type="pathway">
    <text evidence="1">Porphyrin-containing compound metabolism; protoporphyrin-IX biosynthesis; 5-aminolevulinate from L-glutamyl-tRNA(Glu): step 1/2.</text>
</comment>
<comment type="subunit">
    <text evidence="1">Homodimer.</text>
</comment>
<comment type="domain">
    <text evidence="1">Possesses an unusual extended V-shaped dimeric structure with each monomer consisting of three distinct domains arranged along a curved 'spinal' alpha-helix. The N-terminal catalytic domain specifically recognizes the glutamate moiety of the substrate. The second domain is the NADPH-binding domain, and the third C-terminal domain is responsible for dimerization.</text>
</comment>
<comment type="miscellaneous">
    <text evidence="1">During catalysis, the active site Cys acts as a nucleophile attacking the alpha-carbonyl group of tRNA-bound glutamate with the formation of a thioester intermediate between enzyme and glutamate, and the concomitant release of tRNA(Glu). The thioester intermediate is finally reduced by direct hydride transfer from NADPH, to form the product GSA.</text>
</comment>
<comment type="similarity">
    <text evidence="1">Belongs to the glutamyl-tRNA reductase family.</text>
</comment>
<sequence length="436" mass="48410">MNFFVIGVNHKTAPVEVRERFAIPESRLPEATKLLASYPGIEEGMIVSTCNRVEMVARSVNGNADMRGFLKQLYNIDPAQYEQYLYEYRSTEAVRHMFRVASSLDSMVVGEPQILGQVKEAYATARAVGAVSSQLDALLTRAFAVAKRVRTDTSIASSSVSIASVAVELAKKIFGSLQGRSVYIVGAGKMCELAARHFVAHGVEKIYVANRTYERGVAFAKKFNGEAVPIEHLYETVDKADIVLSSTGAPIAIFRKEHGEKFLSRRKNRPMFFLDIAVPRDVDAKMNELDGIFVYDIDDLQQVVHSHISDRKDEAAHAEAIVNAEVEKFEERLRTLDVVPTIVSLQEHLETVRQAEIDRLRGRLGELSPEQEMAVDALTKGIINKIMHTPITTLKTAAKEPESTTVIELVKRIFNLHEKAKDETVKTGPPQSGPGK</sequence>
<keyword id="KW-0521">NADP</keyword>
<keyword id="KW-0560">Oxidoreductase</keyword>
<keyword id="KW-0627">Porphyrin biosynthesis</keyword>
<keyword id="KW-1185">Reference proteome</keyword>
<evidence type="ECO:0000255" key="1">
    <source>
        <dbReference type="HAMAP-Rule" id="MF_00087"/>
    </source>
</evidence>
<feature type="chain" id="PRO_0000334999" description="Glutamyl-tRNA reductase 2">
    <location>
        <begin position="1"/>
        <end position="436"/>
    </location>
</feature>
<feature type="active site" description="Nucleophile" evidence="1">
    <location>
        <position position="50"/>
    </location>
</feature>
<feature type="binding site" evidence="1">
    <location>
        <begin position="49"/>
        <end position="52"/>
    </location>
    <ligand>
        <name>substrate</name>
    </ligand>
</feature>
<feature type="binding site" evidence="1">
    <location>
        <position position="106"/>
    </location>
    <ligand>
        <name>substrate</name>
    </ligand>
</feature>
<feature type="binding site" evidence="1">
    <location>
        <begin position="111"/>
        <end position="113"/>
    </location>
    <ligand>
        <name>substrate</name>
    </ligand>
</feature>
<feature type="binding site" evidence="1">
    <location>
        <position position="117"/>
    </location>
    <ligand>
        <name>substrate</name>
    </ligand>
</feature>
<feature type="binding site" evidence="1">
    <location>
        <begin position="186"/>
        <end position="191"/>
    </location>
    <ligand>
        <name>NADP(+)</name>
        <dbReference type="ChEBI" id="CHEBI:58349"/>
    </ligand>
</feature>
<feature type="site" description="Important for activity" evidence="1">
    <location>
        <position position="96"/>
    </location>
</feature>
<name>HEM12_KORVE</name>
<protein>
    <recommendedName>
        <fullName evidence="1">Glutamyl-tRNA reductase 2</fullName>
        <shortName evidence="1">GluTR 2</shortName>
        <ecNumber evidence="1">1.2.1.70</ecNumber>
    </recommendedName>
</protein>
<organism>
    <name type="scientific">Koribacter versatilis (strain Ellin345)</name>
    <dbReference type="NCBI Taxonomy" id="204669"/>
    <lineage>
        <taxon>Bacteria</taxon>
        <taxon>Pseudomonadati</taxon>
        <taxon>Acidobacteriota</taxon>
        <taxon>Terriglobia</taxon>
        <taxon>Terriglobales</taxon>
        <taxon>Candidatus Korobacteraceae</taxon>
        <taxon>Candidatus Korobacter</taxon>
    </lineage>
</organism>
<reference key="1">
    <citation type="journal article" date="2009" name="Appl. Environ. Microbiol.">
        <title>Three genomes from the phylum Acidobacteria provide insight into the lifestyles of these microorganisms in soils.</title>
        <authorList>
            <person name="Ward N.L."/>
            <person name="Challacombe J.F."/>
            <person name="Janssen P.H."/>
            <person name="Henrissat B."/>
            <person name="Coutinho P.M."/>
            <person name="Wu M."/>
            <person name="Xie G."/>
            <person name="Haft D.H."/>
            <person name="Sait M."/>
            <person name="Badger J."/>
            <person name="Barabote R.D."/>
            <person name="Bradley B."/>
            <person name="Brettin T.S."/>
            <person name="Brinkac L.M."/>
            <person name="Bruce D."/>
            <person name="Creasy T."/>
            <person name="Daugherty S.C."/>
            <person name="Davidsen T.M."/>
            <person name="DeBoy R.T."/>
            <person name="Detter J.C."/>
            <person name="Dodson R.J."/>
            <person name="Durkin A.S."/>
            <person name="Ganapathy A."/>
            <person name="Gwinn-Giglio M."/>
            <person name="Han C.S."/>
            <person name="Khouri H."/>
            <person name="Kiss H."/>
            <person name="Kothari S.P."/>
            <person name="Madupu R."/>
            <person name="Nelson K.E."/>
            <person name="Nelson W.C."/>
            <person name="Paulsen I."/>
            <person name="Penn K."/>
            <person name="Ren Q."/>
            <person name="Rosovitz M.J."/>
            <person name="Selengut J.D."/>
            <person name="Shrivastava S."/>
            <person name="Sullivan S.A."/>
            <person name="Tapia R."/>
            <person name="Thompson L.S."/>
            <person name="Watkins K.L."/>
            <person name="Yang Q."/>
            <person name="Yu C."/>
            <person name="Zafar N."/>
            <person name="Zhou L."/>
            <person name="Kuske C.R."/>
        </authorList>
    </citation>
    <scope>NUCLEOTIDE SEQUENCE [LARGE SCALE GENOMIC DNA]</scope>
    <source>
        <strain>Ellin345</strain>
    </source>
</reference>
<accession>Q1INI5</accession>
<dbReference type="EC" id="1.2.1.70" evidence="1"/>
<dbReference type="EMBL" id="CP000360">
    <property type="protein sequence ID" value="ABF41565.1"/>
    <property type="molecule type" value="Genomic_DNA"/>
</dbReference>
<dbReference type="RefSeq" id="WP_011523366.1">
    <property type="nucleotide sequence ID" value="NC_008009.1"/>
</dbReference>
<dbReference type="SMR" id="Q1INI5"/>
<dbReference type="STRING" id="204669.Acid345_2564"/>
<dbReference type="EnsemblBacteria" id="ABF41565">
    <property type="protein sequence ID" value="ABF41565"/>
    <property type="gene ID" value="Acid345_2564"/>
</dbReference>
<dbReference type="KEGG" id="aba:Acid345_2564"/>
<dbReference type="eggNOG" id="COG0373">
    <property type="taxonomic scope" value="Bacteria"/>
</dbReference>
<dbReference type="HOGENOM" id="CLU_035113_2_2_0"/>
<dbReference type="OrthoDB" id="110209at2"/>
<dbReference type="UniPathway" id="UPA00251">
    <property type="reaction ID" value="UER00316"/>
</dbReference>
<dbReference type="Proteomes" id="UP000002432">
    <property type="component" value="Chromosome"/>
</dbReference>
<dbReference type="GO" id="GO:0008883">
    <property type="term" value="F:glutamyl-tRNA reductase activity"/>
    <property type="evidence" value="ECO:0007669"/>
    <property type="project" value="UniProtKB-UniRule"/>
</dbReference>
<dbReference type="GO" id="GO:0050661">
    <property type="term" value="F:NADP binding"/>
    <property type="evidence" value="ECO:0007669"/>
    <property type="project" value="InterPro"/>
</dbReference>
<dbReference type="GO" id="GO:0019353">
    <property type="term" value="P:protoporphyrinogen IX biosynthetic process from glutamate"/>
    <property type="evidence" value="ECO:0007669"/>
    <property type="project" value="TreeGrafter"/>
</dbReference>
<dbReference type="CDD" id="cd05213">
    <property type="entry name" value="NAD_bind_Glutamyl_tRNA_reduct"/>
    <property type="match status" value="1"/>
</dbReference>
<dbReference type="FunFam" id="3.30.460.30:FF:000001">
    <property type="entry name" value="Glutamyl-tRNA reductase"/>
    <property type="match status" value="1"/>
</dbReference>
<dbReference type="FunFam" id="3.40.50.720:FF:000031">
    <property type="entry name" value="Glutamyl-tRNA reductase"/>
    <property type="match status" value="1"/>
</dbReference>
<dbReference type="Gene3D" id="3.30.460.30">
    <property type="entry name" value="Glutamyl-tRNA reductase, N-terminal domain"/>
    <property type="match status" value="1"/>
</dbReference>
<dbReference type="Gene3D" id="3.40.50.720">
    <property type="entry name" value="NAD(P)-binding Rossmann-like Domain"/>
    <property type="match status" value="1"/>
</dbReference>
<dbReference type="HAMAP" id="MF_00087">
    <property type="entry name" value="Glu_tRNA_reductase"/>
    <property type="match status" value="1"/>
</dbReference>
<dbReference type="InterPro" id="IPR000343">
    <property type="entry name" value="4pyrrol_synth_GluRdtase"/>
</dbReference>
<dbReference type="InterPro" id="IPR015896">
    <property type="entry name" value="4pyrrol_synth_GluRdtase_dimer"/>
</dbReference>
<dbReference type="InterPro" id="IPR015895">
    <property type="entry name" value="4pyrrol_synth_GluRdtase_N"/>
</dbReference>
<dbReference type="InterPro" id="IPR018214">
    <property type="entry name" value="GluRdtase_CS"/>
</dbReference>
<dbReference type="InterPro" id="IPR036453">
    <property type="entry name" value="GluRdtase_dimer_dom_sf"/>
</dbReference>
<dbReference type="InterPro" id="IPR036343">
    <property type="entry name" value="GluRdtase_N_sf"/>
</dbReference>
<dbReference type="InterPro" id="IPR036291">
    <property type="entry name" value="NAD(P)-bd_dom_sf"/>
</dbReference>
<dbReference type="InterPro" id="IPR006151">
    <property type="entry name" value="Shikm_DH/Glu-tRNA_Rdtase"/>
</dbReference>
<dbReference type="NCBIfam" id="TIGR01035">
    <property type="entry name" value="hemA"/>
    <property type="match status" value="1"/>
</dbReference>
<dbReference type="PANTHER" id="PTHR43013">
    <property type="entry name" value="GLUTAMYL-TRNA REDUCTASE"/>
    <property type="match status" value="1"/>
</dbReference>
<dbReference type="PANTHER" id="PTHR43013:SF1">
    <property type="entry name" value="GLUTAMYL-TRNA REDUCTASE"/>
    <property type="match status" value="1"/>
</dbReference>
<dbReference type="Pfam" id="PF00745">
    <property type="entry name" value="GlutR_dimer"/>
    <property type="match status" value="1"/>
</dbReference>
<dbReference type="Pfam" id="PF05201">
    <property type="entry name" value="GlutR_N"/>
    <property type="match status" value="1"/>
</dbReference>
<dbReference type="Pfam" id="PF01488">
    <property type="entry name" value="Shikimate_DH"/>
    <property type="match status" value="1"/>
</dbReference>
<dbReference type="PIRSF" id="PIRSF000445">
    <property type="entry name" value="4pyrrol_synth_GluRdtase"/>
    <property type="match status" value="1"/>
</dbReference>
<dbReference type="SUPFAM" id="SSF69742">
    <property type="entry name" value="Glutamyl tRNA-reductase catalytic, N-terminal domain"/>
    <property type="match status" value="1"/>
</dbReference>
<dbReference type="SUPFAM" id="SSF69075">
    <property type="entry name" value="Glutamyl tRNA-reductase dimerization domain"/>
    <property type="match status" value="1"/>
</dbReference>
<dbReference type="SUPFAM" id="SSF51735">
    <property type="entry name" value="NAD(P)-binding Rossmann-fold domains"/>
    <property type="match status" value="1"/>
</dbReference>
<dbReference type="PROSITE" id="PS00747">
    <property type="entry name" value="GLUTR"/>
    <property type="match status" value="1"/>
</dbReference>